<proteinExistence type="inferred from homology"/>
<reference key="1">
    <citation type="journal article" date="2009" name="J. Bacteriol.">
        <title>Genome sequence of Azotobacter vinelandii, an obligate aerobe specialized to support diverse anaerobic metabolic processes.</title>
        <authorList>
            <person name="Setubal J.C."/>
            <person name="Dos Santos P."/>
            <person name="Goldman B.S."/>
            <person name="Ertesvaag H."/>
            <person name="Espin G."/>
            <person name="Rubio L.M."/>
            <person name="Valla S."/>
            <person name="Almeida N.F."/>
            <person name="Balasubramanian D."/>
            <person name="Cromes L."/>
            <person name="Curatti L."/>
            <person name="Du Z."/>
            <person name="Godsy E."/>
            <person name="Goodner B."/>
            <person name="Hellner-Burris K."/>
            <person name="Hernandez J.A."/>
            <person name="Houmiel K."/>
            <person name="Imperial J."/>
            <person name="Kennedy C."/>
            <person name="Larson T.J."/>
            <person name="Latreille P."/>
            <person name="Ligon L.S."/>
            <person name="Lu J."/>
            <person name="Maerk M."/>
            <person name="Miller N.M."/>
            <person name="Norton S."/>
            <person name="O'Carroll I.P."/>
            <person name="Paulsen I."/>
            <person name="Raulfs E.C."/>
            <person name="Roemer R."/>
            <person name="Rosser J."/>
            <person name="Segura D."/>
            <person name="Slater S."/>
            <person name="Stricklin S.L."/>
            <person name="Studholme D.J."/>
            <person name="Sun J."/>
            <person name="Viana C.J."/>
            <person name="Wallin E."/>
            <person name="Wang B."/>
            <person name="Wheeler C."/>
            <person name="Zhu H."/>
            <person name="Dean D.R."/>
            <person name="Dixon R."/>
            <person name="Wood D."/>
        </authorList>
    </citation>
    <scope>NUCLEOTIDE SEQUENCE [LARGE SCALE GENOMIC DNA]</scope>
    <source>
        <strain>DJ / ATCC BAA-1303</strain>
    </source>
</reference>
<gene>
    <name evidence="1" type="primary">glnS</name>
    <name type="ordered locus">Avin_23520</name>
</gene>
<keyword id="KW-0030">Aminoacyl-tRNA synthetase</keyword>
<keyword id="KW-0067">ATP-binding</keyword>
<keyword id="KW-0963">Cytoplasm</keyword>
<keyword id="KW-0436">Ligase</keyword>
<keyword id="KW-0547">Nucleotide-binding</keyword>
<keyword id="KW-0648">Protein biosynthesis</keyword>
<accession>C1DHE5</accession>
<evidence type="ECO:0000255" key="1">
    <source>
        <dbReference type="HAMAP-Rule" id="MF_00126"/>
    </source>
</evidence>
<feature type="chain" id="PRO_1000203120" description="Glutamine--tRNA ligase">
    <location>
        <begin position="1"/>
        <end position="555"/>
    </location>
</feature>
<feature type="short sequence motif" description="'HIGH' region" evidence="1">
    <location>
        <begin position="35"/>
        <end position="45"/>
    </location>
</feature>
<feature type="short sequence motif" description="'KMSKS' region" evidence="1">
    <location>
        <begin position="269"/>
        <end position="273"/>
    </location>
</feature>
<feature type="binding site" evidence="1">
    <location>
        <begin position="36"/>
        <end position="38"/>
    </location>
    <ligand>
        <name>ATP</name>
        <dbReference type="ChEBI" id="CHEBI:30616"/>
    </ligand>
</feature>
<feature type="binding site" evidence="1">
    <location>
        <begin position="42"/>
        <end position="48"/>
    </location>
    <ligand>
        <name>ATP</name>
        <dbReference type="ChEBI" id="CHEBI:30616"/>
    </ligand>
</feature>
<feature type="binding site" evidence="1">
    <location>
        <position position="68"/>
    </location>
    <ligand>
        <name>L-glutamine</name>
        <dbReference type="ChEBI" id="CHEBI:58359"/>
    </ligand>
</feature>
<feature type="binding site" evidence="1">
    <location>
        <position position="213"/>
    </location>
    <ligand>
        <name>L-glutamine</name>
        <dbReference type="ChEBI" id="CHEBI:58359"/>
    </ligand>
</feature>
<feature type="binding site" evidence="1">
    <location>
        <position position="232"/>
    </location>
    <ligand>
        <name>ATP</name>
        <dbReference type="ChEBI" id="CHEBI:30616"/>
    </ligand>
</feature>
<feature type="binding site" evidence="1">
    <location>
        <begin position="262"/>
        <end position="263"/>
    </location>
    <ligand>
        <name>ATP</name>
        <dbReference type="ChEBI" id="CHEBI:30616"/>
    </ligand>
</feature>
<dbReference type="EC" id="6.1.1.18" evidence="1"/>
<dbReference type="EMBL" id="CP001157">
    <property type="protein sequence ID" value="ACO78540.1"/>
    <property type="molecule type" value="Genomic_DNA"/>
</dbReference>
<dbReference type="RefSeq" id="WP_012700938.1">
    <property type="nucleotide sequence ID" value="NC_012560.1"/>
</dbReference>
<dbReference type="SMR" id="C1DHE5"/>
<dbReference type="STRING" id="322710.Avin_23520"/>
<dbReference type="EnsemblBacteria" id="ACO78540">
    <property type="protein sequence ID" value="ACO78540"/>
    <property type="gene ID" value="Avin_23520"/>
</dbReference>
<dbReference type="GeneID" id="88185536"/>
<dbReference type="KEGG" id="avn:Avin_23520"/>
<dbReference type="eggNOG" id="COG0008">
    <property type="taxonomic scope" value="Bacteria"/>
</dbReference>
<dbReference type="HOGENOM" id="CLU_001882_2_3_6"/>
<dbReference type="OrthoDB" id="9801560at2"/>
<dbReference type="Proteomes" id="UP000002424">
    <property type="component" value="Chromosome"/>
</dbReference>
<dbReference type="GO" id="GO:0005829">
    <property type="term" value="C:cytosol"/>
    <property type="evidence" value="ECO:0007669"/>
    <property type="project" value="TreeGrafter"/>
</dbReference>
<dbReference type="GO" id="GO:0005524">
    <property type="term" value="F:ATP binding"/>
    <property type="evidence" value="ECO:0007669"/>
    <property type="project" value="UniProtKB-UniRule"/>
</dbReference>
<dbReference type="GO" id="GO:0004819">
    <property type="term" value="F:glutamine-tRNA ligase activity"/>
    <property type="evidence" value="ECO:0007669"/>
    <property type="project" value="UniProtKB-UniRule"/>
</dbReference>
<dbReference type="GO" id="GO:0006425">
    <property type="term" value="P:glutaminyl-tRNA aminoacylation"/>
    <property type="evidence" value="ECO:0007669"/>
    <property type="project" value="InterPro"/>
</dbReference>
<dbReference type="GO" id="GO:0006424">
    <property type="term" value="P:glutamyl-tRNA aminoacylation"/>
    <property type="evidence" value="ECO:0007669"/>
    <property type="project" value="UniProtKB-UniRule"/>
</dbReference>
<dbReference type="CDD" id="cd00807">
    <property type="entry name" value="GlnRS_core"/>
    <property type="match status" value="1"/>
</dbReference>
<dbReference type="FunFam" id="2.40.240.10:FF:000001">
    <property type="entry name" value="Glutamine--tRNA ligase"/>
    <property type="match status" value="1"/>
</dbReference>
<dbReference type="FunFam" id="3.40.50.620:FF:000037">
    <property type="entry name" value="Glutamine--tRNA ligase cytoplasmic"/>
    <property type="match status" value="1"/>
</dbReference>
<dbReference type="Gene3D" id="3.40.50.620">
    <property type="entry name" value="HUPs"/>
    <property type="match status" value="1"/>
</dbReference>
<dbReference type="Gene3D" id="2.40.240.10">
    <property type="entry name" value="Ribosomal Protein L25, Chain P"/>
    <property type="match status" value="2"/>
</dbReference>
<dbReference type="HAMAP" id="MF_00126">
    <property type="entry name" value="Gln_tRNA_synth"/>
    <property type="match status" value="1"/>
</dbReference>
<dbReference type="InterPro" id="IPR001412">
    <property type="entry name" value="aa-tRNA-synth_I_CS"/>
</dbReference>
<dbReference type="InterPro" id="IPR004514">
    <property type="entry name" value="Gln-tRNA-synth"/>
</dbReference>
<dbReference type="InterPro" id="IPR050132">
    <property type="entry name" value="Gln/Glu-tRNA_Ligase"/>
</dbReference>
<dbReference type="InterPro" id="IPR022861">
    <property type="entry name" value="Gln_tRNA_ligase_bac"/>
</dbReference>
<dbReference type="InterPro" id="IPR000924">
    <property type="entry name" value="Glu/Gln-tRNA-synth"/>
</dbReference>
<dbReference type="InterPro" id="IPR020058">
    <property type="entry name" value="Glu/Gln-tRNA-synth_Ib_cat-dom"/>
</dbReference>
<dbReference type="InterPro" id="IPR020059">
    <property type="entry name" value="Glu/Gln-tRNA-synth_Ib_codon-bd"/>
</dbReference>
<dbReference type="InterPro" id="IPR020056">
    <property type="entry name" value="Rbsml_bL25/Gln-tRNA_synth_N"/>
</dbReference>
<dbReference type="InterPro" id="IPR011035">
    <property type="entry name" value="Ribosomal_bL25/Gln-tRNA_synth"/>
</dbReference>
<dbReference type="InterPro" id="IPR014729">
    <property type="entry name" value="Rossmann-like_a/b/a_fold"/>
</dbReference>
<dbReference type="InterPro" id="IPR049437">
    <property type="entry name" value="tRNA-synt_1c_C2"/>
</dbReference>
<dbReference type="NCBIfam" id="TIGR00440">
    <property type="entry name" value="glnS"/>
    <property type="match status" value="1"/>
</dbReference>
<dbReference type="NCBIfam" id="NF011291">
    <property type="entry name" value="PRK14703.1"/>
    <property type="match status" value="1"/>
</dbReference>
<dbReference type="PANTHER" id="PTHR43097:SF5">
    <property type="entry name" value="GLUTAMATE--TRNA LIGASE"/>
    <property type="match status" value="1"/>
</dbReference>
<dbReference type="PANTHER" id="PTHR43097">
    <property type="entry name" value="GLUTAMINE-TRNA LIGASE"/>
    <property type="match status" value="1"/>
</dbReference>
<dbReference type="Pfam" id="PF00749">
    <property type="entry name" value="tRNA-synt_1c"/>
    <property type="match status" value="1"/>
</dbReference>
<dbReference type="Pfam" id="PF03950">
    <property type="entry name" value="tRNA-synt_1c_C"/>
    <property type="match status" value="1"/>
</dbReference>
<dbReference type="Pfam" id="PF20974">
    <property type="entry name" value="tRNA-synt_1c_C2"/>
    <property type="match status" value="1"/>
</dbReference>
<dbReference type="PRINTS" id="PR00987">
    <property type="entry name" value="TRNASYNTHGLU"/>
</dbReference>
<dbReference type="SUPFAM" id="SSF52374">
    <property type="entry name" value="Nucleotidylyl transferase"/>
    <property type="match status" value="1"/>
</dbReference>
<dbReference type="SUPFAM" id="SSF50715">
    <property type="entry name" value="Ribosomal protein L25-like"/>
    <property type="match status" value="1"/>
</dbReference>
<dbReference type="PROSITE" id="PS00178">
    <property type="entry name" value="AA_TRNA_LIGASE_I"/>
    <property type="match status" value="1"/>
</dbReference>
<comment type="catalytic activity">
    <reaction evidence="1">
        <text>tRNA(Gln) + L-glutamine + ATP = L-glutaminyl-tRNA(Gln) + AMP + diphosphate</text>
        <dbReference type="Rhea" id="RHEA:20121"/>
        <dbReference type="Rhea" id="RHEA-COMP:9662"/>
        <dbReference type="Rhea" id="RHEA-COMP:9681"/>
        <dbReference type="ChEBI" id="CHEBI:30616"/>
        <dbReference type="ChEBI" id="CHEBI:33019"/>
        <dbReference type="ChEBI" id="CHEBI:58359"/>
        <dbReference type="ChEBI" id="CHEBI:78442"/>
        <dbReference type="ChEBI" id="CHEBI:78521"/>
        <dbReference type="ChEBI" id="CHEBI:456215"/>
        <dbReference type="EC" id="6.1.1.18"/>
    </reaction>
</comment>
<comment type="subunit">
    <text evidence="1">Monomer.</text>
</comment>
<comment type="subcellular location">
    <subcellularLocation>
        <location evidence="1">Cytoplasm</location>
    </subcellularLocation>
</comment>
<comment type="similarity">
    <text evidence="1">Belongs to the class-I aminoacyl-tRNA synthetase family.</text>
</comment>
<sequence>MSKPETPAAANFLRPIVQADLESGKHAKIVTRFPPEPNGYLHIGHAKSICLNFGLAQEFGGECNLRFDDTNPAKEDQEYIDAIKSDVRWLGFQWAGEERYASSYFDQLYDWAIHLIEAGKAYVCDLSPDEAREYRGSLTEPGRNSPYRERSVEENLDLFARMRAGEFPDGARALRAKIDMAAPNMNLRDPILYRIRHAHHHQTGDKWCIYPSYDFTHGQSDAIEGITHSICTLEFEDHRPLYEWFLDNLPVPCRPRQYEFARLNLNYTITSKRKLKQLVDEGHVGGWDDPRMSTLSGYRRRGYTPASIRAFCDMIGVNRAGGVVDIGMLEFAIREDLDANAARAMCVLKPLKVVITNYPQGRVESLELPRHPKQDMGVRVLPFSREIYIDAGDFEETPPAGYKRLIPGGEVRLRGSYVIRADEAIKDEAGNIVELRCSYDENTLGKNPEGRKVKGVIHWVPLEGSIKCEVRLYDRLFKVANPEKSEEGGSFLDNINSGSLVVLTGCRAEPSLANARPEERFQFEREGYFCADLKDSRPGAPVFNRTVTLRDSWGQ</sequence>
<name>SYQ_AZOVD</name>
<organism>
    <name type="scientific">Azotobacter vinelandii (strain DJ / ATCC BAA-1303)</name>
    <dbReference type="NCBI Taxonomy" id="322710"/>
    <lineage>
        <taxon>Bacteria</taxon>
        <taxon>Pseudomonadati</taxon>
        <taxon>Pseudomonadota</taxon>
        <taxon>Gammaproteobacteria</taxon>
        <taxon>Pseudomonadales</taxon>
        <taxon>Pseudomonadaceae</taxon>
        <taxon>Azotobacter</taxon>
    </lineage>
</organism>
<protein>
    <recommendedName>
        <fullName evidence="1">Glutamine--tRNA ligase</fullName>
        <ecNumber evidence="1">6.1.1.18</ecNumber>
    </recommendedName>
    <alternativeName>
        <fullName evidence="1">Glutaminyl-tRNA synthetase</fullName>
        <shortName evidence="1">GlnRS</shortName>
    </alternativeName>
</protein>